<organism>
    <name type="scientific">Oryza sativa subsp. japonica</name>
    <name type="common">Rice</name>
    <dbReference type="NCBI Taxonomy" id="39947"/>
    <lineage>
        <taxon>Eukaryota</taxon>
        <taxon>Viridiplantae</taxon>
        <taxon>Streptophyta</taxon>
        <taxon>Embryophyta</taxon>
        <taxon>Tracheophyta</taxon>
        <taxon>Spermatophyta</taxon>
        <taxon>Magnoliopsida</taxon>
        <taxon>Liliopsida</taxon>
        <taxon>Poales</taxon>
        <taxon>Poaceae</taxon>
        <taxon>BOP clade</taxon>
        <taxon>Oryzoideae</taxon>
        <taxon>Oryzeae</taxon>
        <taxon>Oryzinae</taxon>
        <taxon>Oryza</taxon>
        <taxon>Oryza sativa</taxon>
    </lineage>
</organism>
<keyword id="KW-0175">Coiled coil</keyword>
<keyword id="KW-0325">Glycoprotein</keyword>
<keyword id="KW-0378">Hydrolase</keyword>
<keyword id="KW-0442">Lipid degradation</keyword>
<keyword id="KW-0443">Lipid metabolism</keyword>
<keyword id="KW-1185">Reference proteome</keyword>
<keyword id="KW-0964">Secreted</keyword>
<keyword id="KW-0732">Signal</keyword>
<evidence type="ECO:0000250" key="1"/>
<evidence type="ECO:0000255" key="2"/>
<evidence type="ECO:0000255" key="3">
    <source>
        <dbReference type="PROSITE-ProRule" id="PRU10037"/>
    </source>
</evidence>
<evidence type="ECO:0000305" key="4"/>
<feature type="signal peptide" evidence="2">
    <location>
        <begin position="1"/>
        <end position="21"/>
    </location>
</feature>
<feature type="chain" id="PRO_0000409366" description="Phospholipase A1-II 3">
    <location>
        <begin position="22"/>
        <end position="420"/>
    </location>
</feature>
<feature type="coiled-coil region" evidence="2">
    <location>
        <begin position="367"/>
        <end position="388"/>
    </location>
</feature>
<feature type="active site" description="Acyl-ester intermediate" evidence="1">
    <location>
        <position position="240"/>
    </location>
</feature>
<feature type="active site" description="Charge relay system" evidence="3">
    <location>
        <position position="240"/>
    </location>
</feature>
<feature type="active site" description="Charge relay system" evidence="3">
    <location>
        <position position="305"/>
    </location>
</feature>
<feature type="active site" description="Charge relay system" evidence="3">
    <location>
        <position position="343"/>
    </location>
</feature>
<feature type="glycosylation site" description="N-linked (GlcNAc...) asparagine" evidence="2">
    <location>
        <position position="231"/>
    </location>
</feature>
<feature type="glycosylation site" description="N-linked (GlcNAc...) asparagine" evidence="2">
    <location>
        <position position="294"/>
    </location>
</feature>
<feature type="glycosylation site" description="N-linked (GlcNAc...) asparagine" evidence="2">
    <location>
        <position position="403"/>
    </location>
</feature>
<gene>
    <name type="ordered locus">Os01g0651800</name>
    <name type="ordered locus">LOC_Os01g46290</name>
    <name type="ORF">OJ1159_D09.27</name>
</gene>
<accession>Q8RZ40</accession>
<accession>A0A0P0V5X1</accession>
<protein>
    <recommendedName>
        <fullName>Phospholipase A1-II 3</fullName>
        <ecNumber>3.1.1.-</ecNumber>
    </recommendedName>
</protein>
<reference key="1">
    <citation type="journal article" date="2002" name="Nature">
        <title>The genome sequence and structure of rice chromosome 1.</title>
        <authorList>
            <person name="Sasaki T."/>
            <person name="Matsumoto T."/>
            <person name="Yamamoto K."/>
            <person name="Sakata K."/>
            <person name="Baba T."/>
            <person name="Katayose Y."/>
            <person name="Wu J."/>
            <person name="Niimura Y."/>
            <person name="Cheng Z."/>
            <person name="Nagamura Y."/>
            <person name="Antonio B.A."/>
            <person name="Kanamori H."/>
            <person name="Hosokawa S."/>
            <person name="Masukawa M."/>
            <person name="Arikawa K."/>
            <person name="Chiden Y."/>
            <person name="Hayashi M."/>
            <person name="Okamoto M."/>
            <person name="Ando T."/>
            <person name="Aoki H."/>
            <person name="Arita K."/>
            <person name="Hamada M."/>
            <person name="Harada C."/>
            <person name="Hijishita S."/>
            <person name="Honda M."/>
            <person name="Ichikawa Y."/>
            <person name="Idonuma A."/>
            <person name="Iijima M."/>
            <person name="Ikeda M."/>
            <person name="Ikeno M."/>
            <person name="Ito S."/>
            <person name="Ito T."/>
            <person name="Ito Y."/>
            <person name="Ito Y."/>
            <person name="Iwabuchi A."/>
            <person name="Kamiya K."/>
            <person name="Karasawa W."/>
            <person name="Katagiri S."/>
            <person name="Kikuta A."/>
            <person name="Kobayashi N."/>
            <person name="Kono I."/>
            <person name="Machita K."/>
            <person name="Maehara T."/>
            <person name="Mizuno H."/>
            <person name="Mizubayashi T."/>
            <person name="Mukai Y."/>
            <person name="Nagasaki H."/>
            <person name="Nakashima M."/>
            <person name="Nakama Y."/>
            <person name="Nakamichi Y."/>
            <person name="Nakamura M."/>
            <person name="Namiki N."/>
            <person name="Negishi M."/>
            <person name="Ohta I."/>
            <person name="Ono N."/>
            <person name="Saji S."/>
            <person name="Sakai K."/>
            <person name="Shibata M."/>
            <person name="Shimokawa T."/>
            <person name="Shomura A."/>
            <person name="Song J."/>
            <person name="Takazaki Y."/>
            <person name="Terasawa K."/>
            <person name="Tsuji K."/>
            <person name="Waki K."/>
            <person name="Yamagata H."/>
            <person name="Yamane H."/>
            <person name="Yoshiki S."/>
            <person name="Yoshihara R."/>
            <person name="Yukawa K."/>
            <person name="Zhong H."/>
            <person name="Iwama H."/>
            <person name="Endo T."/>
            <person name="Ito H."/>
            <person name="Hahn J.H."/>
            <person name="Kim H.-I."/>
            <person name="Eun M.-Y."/>
            <person name="Yano M."/>
            <person name="Jiang J."/>
            <person name="Gojobori T."/>
        </authorList>
    </citation>
    <scope>NUCLEOTIDE SEQUENCE [LARGE SCALE GENOMIC DNA]</scope>
    <source>
        <strain>cv. Nipponbare</strain>
    </source>
</reference>
<reference key="2">
    <citation type="journal article" date="2005" name="Nature">
        <title>The map-based sequence of the rice genome.</title>
        <authorList>
            <consortium name="International rice genome sequencing project (IRGSP)"/>
        </authorList>
    </citation>
    <scope>NUCLEOTIDE SEQUENCE [LARGE SCALE GENOMIC DNA]</scope>
    <source>
        <strain>cv. Nipponbare</strain>
    </source>
</reference>
<reference key="3">
    <citation type="journal article" date="2008" name="Nucleic Acids Res.">
        <title>The rice annotation project database (RAP-DB): 2008 update.</title>
        <authorList>
            <consortium name="The rice annotation project (RAP)"/>
        </authorList>
    </citation>
    <scope>GENOME REANNOTATION</scope>
    <source>
        <strain>cv. Nipponbare</strain>
    </source>
</reference>
<reference key="4">
    <citation type="journal article" date="2013" name="Rice">
        <title>Improvement of the Oryza sativa Nipponbare reference genome using next generation sequence and optical map data.</title>
        <authorList>
            <person name="Kawahara Y."/>
            <person name="de la Bastide M."/>
            <person name="Hamilton J.P."/>
            <person name="Kanamori H."/>
            <person name="McCombie W.R."/>
            <person name="Ouyang S."/>
            <person name="Schwartz D.C."/>
            <person name="Tanaka T."/>
            <person name="Wu J."/>
            <person name="Zhou S."/>
            <person name="Childs K.L."/>
            <person name="Davidson R.M."/>
            <person name="Lin H."/>
            <person name="Quesada-Ocampo L."/>
            <person name="Vaillancourt B."/>
            <person name="Sakai H."/>
            <person name="Lee S.S."/>
            <person name="Kim J."/>
            <person name="Numa H."/>
            <person name="Itoh T."/>
            <person name="Buell C.R."/>
            <person name="Matsumoto T."/>
        </authorList>
    </citation>
    <scope>GENOME REANNOTATION</scope>
    <source>
        <strain>cv. Nipponbare</strain>
    </source>
</reference>
<sequence>MCCFLLVSVLLATTLTDVASAQRWRQTSGGGKDRWDGLLDPLDADLRRDIIRYGELAQATSDALIGDPASPFAGASRYAPDAFLRKVRASDPDAYRVTRFVYATSSVRLPDAFMPRPAPSAGAAWSGESNWMGYVAVAADGVAAKAGRRDIVVAWRGTKRAVEWANDLDITLVPADGVVGPGPGWTQPSVHRGFLSVYTSKSFSSPFNKLSAREQVLAEITRLLRAYKNENCSITITGHSLGAALSTLNAIDIVANGYNVRGSSRVPVPVTAIALASPRVGDDQFKRAFDSTSNLSLLRVRNAPDIVPTILPSAFFKDVGAELLVDTRRSPYLKNPAGPAQWHNLECYLHAVAGTQGAGDGAGFSLVVDRDLALVNKEVDALRDEYQVPAAWWVEKNKGMVQNASGRWVLQDHEEGNLAM</sequence>
<dbReference type="EC" id="3.1.1.-"/>
<dbReference type="EMBL" id="AP003792">
    <property type="protein sequence ID" value="BAB89211.1"/>
    <property type="molecule type" value="Genomic_DNA"/>
</dbReference>
<dbReference type="EMBL" id="AP008207">
    <property type="protein sequence ID" value="BAF05648.1"/>
    <property type="molecule type" value="Genomic_DNA"/>
</dbReference>
<dbReference type="EMBL" id="AP014957">
    <property type="protein sequence ID" value="BAS73454.1"/>
    <property type="molecule type" value="Genomic_DNA"/>
</dbReference>
<dbReference type="RefSeq" id="XP_015634003.1">
    <property type="nucleotide sequence ID" value="XM_015778517.1"/>
</dbReference>
<dbReference type="SMR" id="Q8RZ40"/>
<dbReference type="FunCoup" id="Q8RZ40">
    <property type="interactions" value="33"/>
</dbReference>
<dbReference type="STRING" id="39947.Q8RZ40"/>
<dbReference type="ESTHER" id="orysa-Q8RZ40">
    <property type="family name" value="Plant_phospholipase"/>
</dbReference>
<dbReference type="PaxDb" id="39947-Q8RZ40"/>
<dbReference type="EnsemblPlants" id="Os01t0651800-01">
    <property type="protein sequence ID" value="Os01t0651800-01"/>
    <property type="gene ID" value="Os01g0651800"/>
</dbReference>
<dbReference type="Gramene" id="Os01t0651800-01">
    <property type="protein sequence ID" value="Os01t0651800-01"/>
    <property type="gene ID" value="Os01g0651800"/>
</dbReference>
<dbReference type="KEGG" id="dosa:Os01g0651800"/>
<dbReference type="eggNOG" id="KOG4569">
    <property type="taxonomic scope" value="Eukaryota"/>
</dbReference>
<dbReference type="HOGENOM" id="CLU_018841_0_0_1"/>
<dbReference type="InParanoid" id="Q8RZ40"/>
<dbReference type="OMA" id="ECYLHAV"/>
<dbReference type="OrthoDB" id="438440at2759"/>
<dbReference type="Proteomes" id="UP000000763">
    <property type="component" value="Chromosome 1"/>
</dbReference>
<dbReference type="Proteomes" id="UP000059680">
    <property type="component" value="Chromosome 1"/>
</dbReference>
<dbReference type="GO" id="GO:0005576">
    <property type="term" value="C:extracellular region"/>
    <property type="evidence" value="ECO:0007669"/>
    <property type="project" value="UniProtKB-SubCell"/>
</dbReference>
<dbReference type="GO" id="GO:0008970">
    <property type="term" value="F:phospholipase A1 activity"/>
    <property type="evidence" value="ECO:0000250"/>
    <property type="project" value="UniProtKB"/>
</dbReference>
<dbReference type="GO" id="GO:0016042">
    <property type="term" value="P:lipid catabolic process"/>
    <property type="evidence" value="ECO:0007669"/>
    <property type="project" value="UniProtKB-KW"/>
</dbReference>
<dbReference type="CDD" id="cd00519">
    <property type="entry name" value="Lipase_3"/>
    <property type="match status" value="1"/>
</dbReference>
<dbReference type="FunFam" id="3.40.50.1820:FF:000065">
    <property type="entry name" value="Phospholipase A1-II 3"/>
    <property type="match status" value="1"/>
</dbReference>
<dbReference type="Gene3D" id="3.40.50.1820">
    <property type="entry name" value="alpha/beta hydrolase"/>
    <property type="match status" value="1"/>
</dbReference>
<dbReference type="InterPro" id="IPR029058">
    <property type="entry name" value="AB_hydrolase_fold"/>
</dbReference>
<dbReference type="InterPro" id="IPR002921">
    <property type="entry name" value="Fungal_lipase-type"/>
</dbReference>
<dbReference type="InterPro" id="IPR033556">
    <property type="entry name" value="PLA"/>
</dbReference>
<dbReference type="PANTHER" id="PTHR31828:SF8">
    <property type="entry name" value="PHOSPHOLIPASE A1-II 3"/>
    <property type="match status" value="1"/>
</dbReference>
<dbReference type="PANTHER" id="PTHR31828">
    <property type="entry name" value="PHOSPHOLIPASE A1-IIGAMMA"/>
    <property type="match status" value="1"/>
</dbReference>
<dbReference type="Pfam" id="PF01764">
    <property type="entry name" value="Lipase_3"/>
    <property type="match status" value="1"/>
</dbReference>
<dbReference type="SUPFAM" id="SSF53474">
    <property type="entry name" value="alpha/beta-Hydrolases"/>
    <property type="match status" value="1"/>
</dbReference>
<dbReference type="PROSITE" id="PS00120">
    <property type="entry name" value="LIPASE_SER"/>
    <property type="match status" value="1"/>
</dbReference>
<comment type="function">
    <text evidence="1">Acylhydrolase that catalyzes the hydrolysis of phospholipids at the sn-1 position.</text>
</comment>
<comment type="subcellular location">
    <subcellularLocation>
        <location evidence="4">Secreted</location>
    </subcellularLocation>
</comment>
<comment type="similarity">
    <text evidence="4">Belongs to the AB hydrolase superfamily. Lipase family.</text>
</comment>
<name>PLA3_ORYSJ</name>
<proteinExistence type="evidence at transcript level"/>